<accession>P04947</accession>
<organism>
    <name type="scientific">Microchaete diplosiphon</name>
    <name type="common">Fremyella diplosiphon</name>
    <dbReference type="NCBI Taxonomy" id="1197"/>
    <lineage>
        <taxon>Bacteria</taxon>
        <taxon>Bacillati</taxon>
        <taxon>Cyanobacteriota</taxon>
        <taxon>Cyanophyceae</taxon>
        <taxon>Nostocales</taxon>
        <taxon>Rivulariaceae</taxon>
        <taxon>Microchaete</taxon>
    </lineage>
</organism>
<evidence type="ECO:0000250" key="1"/>
<evidence type="ECO:0000255" key="2"/>
<evidence type="ECO:0000305" key="3"/>
<keyword id="KW-0028">Amino-acid biosynthesis</keyword>
<keyword id="KW-0067">ATP-binding</keyword>
<keyword id="KW-0963">Cytoplasm</keyword>
<keyword id="KW-0418">Kinase</keyword>
<keyword id="KW-0547">Nucleotide-binding</keyword>
<keyword id="KW-0791">Threonine biosynthesis</keyword>
<keyword id="KW-0808">Transferase</keyword>
<comment type="function">
    <text evidence="1">Catalyzes the ATP-dependent phosphorylation of L-homoserine to L-homoserine phosphate.</text>
</comment>
<comment type="catalytic activity">
    <reaction>
        <text>L-homoserine + ATP = O-phospho-L-homoserine + ADP + H(+)</text>
        <dbReference type="Rhea" id="RHEA:13985"/>
        <dbReference type="ChEBI" id="CHEBI:15378"/>
        <dbReference type="ChEBI" id="CHEBI:30616"/>
        <dbReference type="ChEBI" id="CHEBI:57476"/>
        <dbReference type="ChEBI" id="CHEBI:57590"/>
        <dbReference type="ChEBI" id="CHEBI:456216"/>
        <dbReference type="EC" id="2.7.1.39"/>
    </reaction>
</comment>
<comment type="pathway">
    <text>Amino-acid biosynthesis; L-threonine biosynthesis; L-threonine from L-aspartate: step 4/5.</text>
</comment>
<comment type="subcellular location">
    <subcellularLocation>
        <location evidence="3">Cytoplasm</location>
    </subcellularLocation>
</comment>
<comment type="similarity">
    <text evidence="3">Belongs to the GHMP kinase family. Homoserine kinase subfamily.</text>
</comment>
<gene>
    <name type="primary">thrB</name>
</gene>
<name>KHSE_MICDP</name>
<dbReference type="EC" id="2.7.1.39"/>
<dbReference type="EMBL" id="Y00522">
    <property type="protein sequence ID" value="CAA68576.1"/>
    <property type="molecule type" value="Genomic_DNA"/>
</dbReference>
<dbReference type="SMR" id="P04947"/>
<dbReference type="UniPathway" id="UPA00050">
    <property type="reaction ID" value="UER00064"/>
</dbReference>
<dbReference type="GO" id="GO:0005737">
    <property type="term" value="C:cytoplasm"/>
    <property type="evidence" value="ECO:0007669"/>
    <property type="project" value="UniProtKB-SubCell"/>
</dbReference>
<dbReference type="GO" id="GO:0005524">
    <property type="term" value="F:ATP binding"/>
    <property type="evidence" value="ECO:0007669"/>
    <property type="project" value="UniProtKB-UniRule"/>
</dbReference>
<dbReference type="GO" id="GO:0004413">
    <property type="term" value="F:homoserine kinase activity"/>
    <property type="evidence" value="ECO:0007669"/>
    <property type="project" value="UniProtKB-UniRule"/>
</dbReference>
<dbReference type="GO" id="GO:0009088">
    <property type="term" value="P:threonine biosynthetic process"/>
    <property type="evidence" value="ECO:0007669"/>
    <property type="project" value="UniProtKB-UniRule"/>
</dbReference>
<dbReference type="Gene3D" id="3.30.230.10">
    <property type="match status" value="1"/>
</dbReference>
<dbReference type="Gene3D" id="3.30.70.890">
    <property type="entry name" value="GHMP kinase, C-terminal domain"/>
    <property type="match status" value="1"/>
</dbReference>
<dbReference type="HAMAP" id="MF_00384">
    <property type="entry name" value="Homoser_kinase"/>
    <property type="match status" value="1"/>
</dbReference>
<dbReference type="InterPro" id="IPR013750">
    <property type="entry name" value="GHMP_kinase_C_dom"/>
</dbReference>
<dbReference type="InterPro" id="IPR036554">
    <property type="entry name" value="GHMP_kinase_C_sf"/>
</dbReference>
<dbReference type="InterPro" id="IPR006204">
    <property type="entry name" value="GHMP_kinase_N_dom"/>
</dbReference>
<dbReference type="InterPro" id="IPR006203">
    <property type="entry name" value="GHMP_knse_ATP-bd_CS"/>
</dbReference>
<dbReference type="InterPro" id="IPR000870">
    <property type="entry name" value="Homoserine_kinase"/>
</dbReference>
<dbReference type="InterPro" id="IPR020568">
    <property type="entry name" value="Ribosomal_Su5_D2-typ_SF"/>
</dbReference>
<dbReference type="InterPro" id="IPR014721">
    <property type="entry name" value="Ribsml_uS5_D2-typ_fold_subgr"/>
</dbReference>
<dbReference type="NCBIfam" id="NF002288">
    <property type="entry name" value="PRK01212.1-4"/>
    <property type="match status" value="1"/>
</dbReference>
<dbReference type="NCBIfam" id="TIGR00191">
    <property type="entry name" value="thrB"/>
    <property type="match status" value="1"/>
</dbReference>
<dbReference type="PANTHER" id="PTHR20861:SF1">
    <property type="entry name" value="HOMOSERINE KINASE"/>
    <property type="match status" value="1"/>
</dbReference>
<dbReference type="PANTHER" id="PTHR20861">
    <property type="entry name" value="HOMOSERINE/4-DIPHOSPHOCYTIDYL-2-C-METHYL-D-ERYTHRITOL KINASE"/>
    <property type="match status" value="1"/>
</dbReference>
<dbReference type="Pfam" id="PF08544">
    <property type="entry name" value="GHMP_kinases_C"/>
    <property type="match status" value="1"/>
</dbReference>
<dbReference type="Pfam" id="PF00288">
    <property type="entry name" value="GHMP_kinases_N"/>
    <property type="match status" value="1"/>
</dbReference>
<dbReference type="PIRSF" id="PIRSF000676">
    <property type="entry name" value="Homoser_kin"/>
    <property type="match status" value="1"/>
</dbReference>
<dbReference type="PRINTS" id="PR00958">
    <property type="entry name" value="HOMSERKINASE"/>
</dbReference>
<dbReference type="SUPFAM" id="SSF55060">
    <property type="entry name" value="GHMP Kinase, C-terminal domain"/>
    <property type="match status" value="1"/>
</dbReference>
<dbReference type="SUPFAM" id="SSF54211">
    <property type="entry name" value="Ribosomal protein S5 domain 2-like"/>
    <property type="match status" value="1"/>
</dbReference>
<dbReference type="PROSITE" id="PS00627">
    <property type="entry name" value="GHMP_KINASES_ATP"/>
    <property type="match status" value="1"/>
</dbReference>
<sequence length="307" mass="31991">MSVVSSVTVTVPATTANLGPGFDCIGAALTLYNKVKFTRLDAGGLIIHVTGKEAEGVNTDESNLLYQAFVKLYQHIEQIPPSVKIEIDLGVPLARGLGSSATAIVGGLVAANQLAGEPLSQLQVMELAIAMEGHPDNVVPALLGGCRLAATSAEGWEICDVPWDENVVPVVAIPDFELSTQEARRVLPTEFSRADAIFNTAHLGLLLRGLATGKGEWLKTALQDKLHQPYRKALIPGYDAVNQAAVAAGAYGMVISGAGPTLLALADAQNSQAVAAAMQTAWQTVGITADVRSLSLDNQGASSLNEG</sequence>
<protein>
    <recommendedName>
        <fullName>Homoserine kinase</fullName>
        <shortName>HK</shortName>
        <shortName>HSK</shortName>
        <ecNumber>2.7.1.39</ecNumber>
    </recommendedName>
</protein>
<proteinExistence type="inferred from homology"/>
<reference key="1">
    <citation type="journal article" date="1987" name="Mol. Microbiol.">
        <title>Cloning and nucleotide sequence of the thrB gene from the cyanobacterium Calothrix PCC 7601.</title>
        <authorList>
            <person name="Parsot C."/>
            <person name="Mazel D."/>
        </authorList>
    </citation>
    <scope>NUCLEOTIDE SEQUENCE [GENOMIC DNA]</scope>
</reference>
<feature type="chain" id="PRO_0000156572" description="Homoserine kinase">
    <location>
        <begin position="1"/>
        <end position="307"/>
    </location>
</feature>
<feature type="binding site" evidence="2">
    <location>
        <begin position="92"/>
        <end position="102"/>
    </location>
    <ligand>
        <name>ATP</name>
        <dbReference type="ChEBI" id="CHEBI:30616"/>
    </ligand>
</feature>